<evidence type="ECO:0000255" key="1">
    <source>
        <dbReference type="HAMAP-Rule" id="MF_00502"/>
    </source>
</evidence>
<evidence type="ECO:0000305" key="2"/>
<sequence>MKPGIHPSYGPVVFRDKAADFAFLTRSTMTSDRTVAWEDGNTYPVVDVEISSASHPFYTGTARVLDTAGRVERFERRYGRGGAR</sequence>
<protein>
    <recommendedName>
        <fullName evidence="1">Large ribosomal subunit protein bL31B</fullName>
    </recommendedName>
    <alternativeName>
        <fullName evidence="2">50S ribosomal protein L31 type B</fullName>
    </alternativeName>
</protein>
<keyword id="KW-0687">Ribonucleoprotein</keyword>
<keyword id="KW-0689">Ribosomal protein</keyword>
<reference key="1">
    <citation type="journal article" date="2008" name="J. Bacteriol.">
        <title>Genome sequence of the streptomycin-producing microorganism Streptomyces griseus IFO 13350.</title>
        <authorList>
            <person name="Ohnishi Y."/>
            <person name="Ishikawa J."/>
            <person name="Hara H."/>
            <person name="Suzuki H."/>
            <person name="Ikenoya M."/>
            <person name="Ikeda H."/>
            <person name="Yamashita A."/>
            <person name="Hattori M."/>
            <person name="Horinouchi S."/>
        </authorList>
    </citation>
    <scope>NUCLEOTIDE SEQUENCE [LARGE SCALE GENOMIC DNA]</scope>
    <source>
        <strain>JCM 4626 / CBS 651.72 / NBRC 13350 / KCC S-0626 / ISP 5235</strain>
    </source>
</reference>
<feature type="chain" id="PRO_1000126840" description="Large ribosomal subunit protein bL31B">
    <location>
        <begin position="1"/>
        <end position="84"/>
    </location>
</feature>
<proteinExistence type="inferred from homology"/>
<comment type="subunit">
    <text evidence="1">Part of the 50S ribosomal subunit.</text>
</comment>
<comment type="similarity">
    <text evidence="1">Belongs to the bacterial ribosomal protein bL31 family. Type B subfamily.</text>
</comment>
<name>RL31B_STRGG</name>
<dbReference type="EMBL" id="AP009493">
    <property type="protein sequence ID" value="BAG17376.1"/>
    <property type="molecule type" value="Genomic_DNA"/>
</dbReference>
<dbReference type="RefSeq" id="WP_003964411.1">
    <property type="nucleotide sequence ID" value="NC_010572.1"/>
</dbReference>
<dbReference type="SMR" id="B1VRF8"/>
<dbReference type="KEGG" id="sgr:SGR_547"/>
<dbReference type="eggNOG" id="COG0254">
    <property type="taxonomic scope" value="Bacteria"/>
</dbReference>
<dbReference type="HOGENOM" id="CLU_114306_2_2_11"/>
<dbReference type="Proteomes" id="UP000001685">
    <property type="component" value="Chromosome"/>
</dbReference>
<dbReference type="GO" id="GO:1990904">
    <property type="term" value="C:ribonucleoprotein complex"/>
    <property type="evidence" value="ECO:0007669"/>
    <property type="project" value="UniProtKB-KW"/>
</dbReference>
<dbReference type="GO" id="GO:0005840">
    <property type="term" value="C:ribosome"/>
    <property type="evidence" value="ECO:0007669"/>
    <property type="project" value="UniProtKB-KW"/>
</dbReference>
<dbReference type="GO" id="GO:0003735">
    <property type="term" value="F:structural constituent of ribosome"/>
    <property type="evidence" value="ECO:0007669"/>
    <property type="project" value="InterPro"/>
</dbReference>
<dbReference type="GO" id="GO:0006412">
    <property type="term" value="P:translation"/>
    <property type="evidence" value="ECO:0007669"/>
    <property type="project" value="UniProtKB-UniRule"/>
</dbReference>
<dbReference type="Gene3D" id="4.10.830.30">
    <property type="entry name" value="Ribosomal protein L31"/>
    <property type="match status" value="1"/>
</dbReference>
<dbReference type="HAMAP" id="MF_00502">
    <property type="entry name" value="Ribosomal_bL31_2"/>
    <property type="match status" value="1"/>
</dbReference>
<dbReference type="InterPro" id="IPR034704">
    <property type="entry name" value="Ribosomal_bL28/bL31-like_sf"/>
</dbReference>
<dbReference type="InterPro" id="IPR002150">
    <property type="entry name" value="Ribosomal_bL31"/>
</dbReference>
<dbReference type="InterPro" id="IPR027493">
    <property type="entry name" value="Ribosomal_bL31_B"/>
</dbReference>
<dbReference type="InterPro" id="IPR042105">
    <property type="entry name" value="Ribosomal_bL31_sf"/>
</dbReference>
<dbReference type="NCBIfam" id="TIGR00105">
    <property type="entry name" value="L31"/>
    <property type="match status" value="1"/>
</dbReference>
<dbReference type="NCBIfam" id="NF002462">
    <property type="entry name" value="PRK01678.1"/>
    <property type="match status" value="1"/>
</dbReference>
<dbReference type="PANTHER" id="PTHR33280">
    <property type="entry name" value="50S RIBOSOMAL PROTEIN L31, CHLOROPLASTIC"/>
    <property type="match status" value="1"/>
</dbReference>
<dbReference type="PANTHER" id="PTHR33280:SF1">
    <property type="entry name" value="LARGE RIBOSOMAL SUBUNIT PROTEIN BL31C"/>
    <property type="match status" value="1"/>
</dbReference>
<dbReference type="Pfam" id="PF01197">
    <property type="entry name" value="Ribosomal_L31"/>
    <property type="match status" value="1"/>
</dbReference>
<dbReference type="PRINTS" id="PR01249">
    <property type="entry name" value="RIBOSOMALL31"/>
</dbReference>
<dbReference type="SUPFAM" id="SSF143800">
    <property type="entry name" value="L28p-like"/>
    <property type="match status" value="1"/>
</dbReference>
<dbReference type="PROSITE" id="PS01143">
    <property type="entry name" value="RIBOSOMAL_L31"/>
    <property type="match status" value="1"/>
</dbReference>
<organism>
    <name type="scientific">Streptomyces griseus subsp. griseus (strain JCM 4626 / CBS 651.72 / NBRC 13350 / KCC S-0626 / ISP 5235)</name>
    <dbReference type="NCBI Taxonomy" id="455632"/>
    <lineage>
        <taxon>Bacteria</taxon>
        <taxon>Bacillati</taxon>
        <taxon>Actinomycetota</taxon>
        <taxon>Actinomycetes</taxon>
        <taxon>Kitasatosporales</taxon>
        <taxon>Streptomycetaceae</taxon>
        <taxon>Streptomyces</taxon>
    </lineage>
</organism>
<gene>
    <name evidence="1" type="primary">rpmE2</name>
    <name type="ordered locus">SGR_547</name>
</gene>
<accession>B1VRF8</accession>